<proteinExistence type="inferred from homology"/>
<organism>
    <name type="scientific">Thermosipho melanesiensis (strain DSM 12029 / CIP 104789 / BI429)</name>
    <dbReference type="NCBI Taxonomy" id="391009"/>
    <lineage>
        <taxon>Bacteria</taxon>
        <taxon>Thermotogati</taxon>
        <taxon>Thermotogota</taxon>
        <taxon>Thermotogae</taxon>
        <taxon>Thermotogales</taxon>
        <taxon>Fervidobacteriaceae</taxon>
        <taxon>Thermosipho</taxon>
    </lineage>
</organism>
<feature type="chain" id="PRO_1000052161" description="Large ribosomal subunit protein uL3">
    <location>
        <begin position="1"/>
        <end position="205"/>
    </location>
</feature>
<name>RL3_THEM4</name>
<reference key="1">
    <citation type="submission" date="2007-05" db="EMBL/GenBank/DDBJ databases">
        <title>Complete sequence of Thermosipho melanesiensis BI429.</title>
        <authorList>
            <consortium name="US DOE Joint Genome Institute"/>
            <person name="Copeland A."/>
            <person name="Lucas S."/>
            <person name="Lapidus A."/>
            <person name="Barry K."/>
            <person name="Glavina del Rio T."/>
            <person name="Dalin E."/>
            <person name="Tice H."/>
            <person name="Pitluck S."/>
            <person name="Chertkov O."/>
            <person name="Brettin T."/>
            <person name="Bruce D."/>
            <person name="Detter J.C."/>
            <person name="Han C."/>
            <person name="Schmutz J."/>
            <person name="Larimer F."/>
            <person name="Land M."/>
            <person name="Hauser L."/>
            <person name="Kyrpides N."/>
            <person name="Mikhailova N."/>
            <person name="Nelson K."/>
            <person name="Gogarten J.P."/>
            <person name="Noll K."/>
            <person name="Richardson P."/>
        </authorList>
    </citation>
    <scope>NUCLEOTIDE SEQUENCE [LARGE SCALE GENOMIC DNA]</scope>
    <source>
        <strain>DSM 12029 / CIP 104789 / BI429</strain>
    </source>
</reference>
<accession>A6LLL3</accession>
<comment type="function">
    <text evidence="1">One of the primary rRNA binding proteins, it binds directly near the 3'-end of the 23S rRNA, where it nucleates assembly of the 50S subunit.</text>
</comment>
<comment type="subunit">
    <text evidence="1">Part of the 50S ribosomal subunit. Forms a cluster with proteins L14 and L19.</text>
</comment>
<comment type="similarity">
    <text evidence="1">Belongs to the universal ribosomal protein uL3 family.</text>
</comment>
<evidence type="ECO:0000255" key="1">
    <source>
        <dbReference type="HAMAP-Rule" id="MF_01325"/>
    </source>
</evidence>
<evidence type="ECO:0000305" key="2"/>
<protein>
    <recommendedName>
        <fullName evidence="1">Large ribosomal subunit protein uL3</fullName>
    </recommendedName>
    <alternativeName>
        <fullName evidence="2">50S ribosomal protein L3</fullName>
    </alternativeName>
</protein>
<gene>
    <name evidence="1" type="primary">rplC</name>
    <name type="ordered locus">Tmel_0953</name>
</gene>
<keyword id="KW-0687">Ribonucleoprotein</keyword>
<keyword id="KW-0689">Ribosomal protein</keyword>
<keyword id="KW-0694">RNA-binding</keyword>
<keyword id="KW-0699">rRNA-binding</keyword>
<dbReference type="EMBL" id="CP000716">
    <property type="protein sequence ID" value="ABR30814.1"/>
    <property type="molecule type" value="Genomic_DNA"/>
</dbReference>
<dbReference type="RefSeq" id="WP_012057175.1">
    <property type="nucleotide sequence ID" value="NC_009616.1"/>
</dbReference>
<dbReference type="SMR" id="A6LLL3"/>
<dbReference type="STRING" id="391009.Tmel_0953"/>
<dbReference type="KEGG" id="tme:Tmel_0953"/>
<dbReference type="eggNOG" id="COG0087">
    <property type="taxonomic scope" value="Bacteria"/>
</dbReference>
<dbReference type="HOGENOM" id="CLU_044142_4_1_0"/>
<dbReference type="OrthoDB" id="9806135at2"/>
<dbReference type="Proteomes" id="UP000001110">
    <property type="component" value="Chromosome"/>
</dbReference>
<dbReference type="GO" id="GO:0022625">
    <property type="term" value="C:cytosolic large ribosomal subunit"/>
    <property type="evidence" value="ECO:0007669"/>
    <property type="project" value="TreeGrafter"/>
</dbReference>
<dbReference type="GO" id="GO:0019843">
    <property type="term" value="F:rRNA binding"/>
    <property type="evidence" value="ECO:0007669"/>
    <property type="project" value="UniProtKB-UniRule"/>
</dbReference>
<dbReference type="GO" id="GO:0003735">
    <property type="term" value="F:structural constituent of ribosome"/>
    <property type="evidence" value="ECO:0007669"/>
    <property type="project" value="InterPro"/>
</dbReference>
<dbReference type="GO" id="GO:0006412">
    <property type="term" value="P:translation"/>
    <property type="evidence" value="ECO:0007669"/>
    <property type="project" value="UniProtKB-UniRule"/>
</dbReference>
<dbReference type="FunFam" id="2.40.30.10:FF:000004">
    <property type="entry name" value="50S ribosomal protein L3"/>
    <property type="match status" value="1"/>
</dbReference>
<dbReference type="FunFam" id="3.30.160.810:FF:000001">
    <property type="entry name" value="50S ribosomal protein L3"/>
    <property type="match status" value="1"/>
</dbReference>
<dbReference type="Gene3D" id="3.30.160.810">
    <property type="match status" value="1"/>
</dbReference>
<dbReference type="Gene3D" id="2.40.30.10">
    <property type="entry name" value="Translation factors"/>
    <property type="match status" value="1"/>
</dbReference>
<dbReference type="HAMAP" id="MF_01325_B">
    <property type="entry name" value="Ribosomal_uL3_B"/>
    <property type="match status" value="1"/>
</dbReference>
<dbReference type="InterPro" id="IPR000597">
    <property type="entry name" value="Ribosomal_uL3"/>
</dbReference>
<dbReference type="InterPro" id="IPR019927">
    <property type="entry name" value="Ribosomal_uL3_bac/org-type"/>
</dbReference>
<dbReference type="InterPro" id="IPR019926">
    <property type="entry name" value="Ribosomal_uL3_CS"/>
</dbReference>
<dbReference type="InterPro" id="IPR009000">
    <property type="entry name" value="Transl_B-barrel_sf"/>
</dbReference>
<dbReference type="NCBIfam" id="TIGR03625">
    <property type="entry name" value="L3_bact"/>
    <property type="match status" value="1"/>
</dbReference>
<dbReference type="PANTHER" id="PTHR11229">
    <property type="entry name" value="50S RIBOSOMAL PROTEIN L3"/>
    <property type="match status" value="1"/>
</dbReference>
<dbReference type="PANTHER" id="PTHR11229:SF16">
    <property type="entry name" value="LARGE RIBOSOMAL SUBUNIT PROTEIN UL3C"/>
    <property type="match status" value="1"/>
</dbReference>
<dbReference type="Pfam" id="PF00297">
    <property type="entry name" value="Ribosomal_L3"/>
    <property type="match status" value="1"/>
</dbReference>
<dbReference type="SUPFAM" id="SSF50447">
    <property type="entry name" value="Translation proteins"/>
    <property type="match status" value="1"/>
</dbReference>
<dbReference type="PROSITE" id="PS00474">
    <property type="entry name" value="RIBOSOMAL_L3"/>
    <property type="match status" value="1"/>
</dbReference>
<sequence length="205" mass="22393">MKMIIGRKLGMTRVFVGDKVVPVTVIKAGPCFVVQKKTIETDGYNAVQLGFEEAKKVNKPMEGVFKKAGVNPLKVLKEFRVEDPDKFEVGQEIKVDIFSEGDKIDITGWSKGRGFAGAMKRWGFRGGPKSHGAKFHRELGSVGQHSEPARIFKGKKMPGQYGNERVTILNSEIVKIDVENNLIAVKGGVPGARGGLVLIKSAKRG</sequence>